<organism>
    <name type="scientific">Fusobacterium nucleatum subsp. nucleatum (strain ATCC 25586 / DSM 15643 / BCRC 10681 / CIP 101130 / JCM 8532 / KCTC 2640 / LMG 13131 / VPI 4355)</name>
    <dbReference type="NCBI Taxonomy" id="190304"/>
    <lineage>
        <taxon>Bacteria</taxon>
        <taxon>Fusobacteriati</taxon>
        <taxon>Fusobacteriota</taxon>
        <taxon>Fusobacteriia</taxon>
        <taxon>Fusobacteriales</taxon>
        <taxon>Fusobacteriaceae</taxon>
        <taxon>Fusobacterium</taxon>
    </lineage>
</organism>
<evidence type="ECO:0000255" key="1">
    <source>
        <dbReference type="HAMAP-Rule" id="MF_00417"/>
    </source>
</evidence>
<dbReference type="EC" id="3.4.19.3" evidence="1"/>
<dbReference type="EMBL" id="AE009951">
    <property type="protein sequence ID" value="AAL93843.1"/>
    <property type="molecule type" value="Genomic_DNA"/>
</dbReference>
<dbReference type="RefSeq" id="NP_602544.1">
    <property type="nucleotide sequence ID" value="NC_003454.1"/>
</dbReference>
<dbReference type="RefSeq" id="WP_011015794.1">
    <property type="nucleotide sequence ID" value="NZ_OZ209243.1"/>
</dbReference>
<dbReference type="SMR" id="Q8RI83"/>
<dbReference type="FunCoup" id="Q8RI83">
    <property type="interactions" value="42"/>
</dbReference>
<dbReference type="STRING" id="190304.FN1728"/>
<dbReference type="MEROPS" id="C15.001"/>
<dbReference type="PaxDb" id="190304-FN1728"/>
<dbReference type="EnsemblBacteria" id="AAL93843">
    <property type="protein sequence ID" value="AAL93843"/>
    <property type="gene ID" value="FN1728"/>
</dbReference>
<dbReference type="GeneID" id="79782660"/>
<dbReference type="KEGG" id="fnu:FN1728"/>
<dbReference type="PATRIC" id="fig|190304.8.peg.217"/>
<dbReference type="eggNOG" id="COG2039">
    <property type="taxonomic scope" value="Bacteria"/>
</dbReference>
<dbReference type="HOGENOM" id="CLU_043960_4_0_0"/>
<dbReference type="InParanoid" id="Q8RI83"/>
<dbReference type="BioCyc" id="FNUC190304:G1FZS-228-MONOMER"/>
<dbReference type="Proteomes" id="UP000002521">
    <property type="component" value="Chromosome"/>
</dbReference>
<dbReference type="GO" id="GO:0005829">
    <property type="term" value="C:cytosol"/>
    <property type="evidence" value="ECO:0007669"/>
    <property type="project" value="InterPro"/>
</dbReference>
<dbReference type="GO" id="GO:0016920">
    <property type="term" value="F:pyroglutamyl-peptidase activity"/>
    <property type="evidence" value="ECO:0007669"/>
    <property type="project" value="UniProtKB-UniRule"/>
</dbReference>
<dbReference type="GO" id="GO:0006508">
    <property type="term" value="P:proteolysis"/>
    <property type="evidence" value="ECO:0007669"/>
    <property type="project" value="UniProtKB-KW"/>
</dbReference>
<dbReference type="CDD" id="cd00501">
    <property type="entry name" value="Peptidase_C15"/>
    <property type="match status" value="1"/>
</dbReference>
<dbReference type="FunFam" id="3.40.630.20:FF:000001">
    <property type="entry name" value="Pyrrolidone-carboxylate peptidase"/>
    <property type="match status" value="1"/>
</dbReference>
<dbReference type="Gene3D" id="3.40.630.20">
    <property type="entry name" value="Peptidase C15, pyroglutamyl peptidase I-like"/>
    <property type="match status" value="1"/>
</dbReference>
<dbReference type="HAMAP" id="MF_00417">
    <property type="entry name" value="Pyrrolid_peptidase"/>
    <property type="match status" value="1"/>
</dbReference>
<dbReference type="InterPro" id="IPR000816">
    <property type="entry name" value="Peptidase_C15"/>
</dbReference>
<dbReference type="InterPro" id="IPR016125">
    <property type="entry name" value="Peptidase_C15-like"/>
</dbReference>
<dbReference type="InterPro" id="IPR036440">
    <property type="entry name" value="Peptidase_C15-like_sf"/>
</dbReference>
<dbReference type="InterPro" id="IPR029762">
    <property type="entry name" value="PGP-I_bact-type"/>
</dbReference>
<dbReference type="InterPro" id="IPR033694">
    <property type="entry name" value="PGPEP1_Cys_AS"/>
</dbReference>
<dbReference type="InterPro" id="IPR033693">
    <property type="entry name" value="PGPEP1_Glu_AS"/>
</dbReference>
<dbReference type="NCBIfam" id="NF009676">
    <property type="entry name" value="PRK13197.1"/>
    <property type="match status" value="1"/>
</dbReference>
<dbReference type="NCBIfam" id="TIGR00504">
    <property type="entry name" value="pyro_pdase"/>
    <property type="match status" value="1"/>
</dbReference>
<dbReference type="PANTHER" id="PTHR23402">
    <property type="entry name" value="PROTEASE FAMILY C15 PYROGLUTAMYL-PEPTIDASE I-RELATED"/>
    <property type="match status" value="1"/>
</dbReference>
<dbReference type="PANTHER" id="PTHR23402:SF1">
    <property type="entry name" value="PYROGLUTAMYL-PEPTIDASE I"/>
    <property type="match status" value="1"/>
</dbReference>
<dbReference type="Pfam" id="PF01470">
    <property type="entry name" value="Peptidase_C15"/>
    <property type="match status" value="1"/>
</dbReference>
<dbReference type="PIRSF" id="PIRSF015592">
    <property type="entry name" value="Prld-crbxl_pptds"/>
    <property type="match status" value="1"/>
</dbReference>
<dbReference type="PRINTS" id="PR00706">
    <property type="entry name" value="PYROGLUPTASE"/>
</dbReference>
<dbReference type="SUPFAM" id="SSF53182">
    <property type="entry name" value="Pyrrolidone carboxyl peptidase (pyroglutamate aminopeptidase)"/>
    <property type="match status" value="1"/>
</dbReference>
<dbReference type="PROSITE" id="PS01334">
    <property type="entry name" value="PYRASE_CYS"/>
    <property type="match status" value="1"/>
</dbReference>
<dbReference type="PROSITE" id="PS01333">
    <property type="entry name" value="PYRASE_GLU"/>
    <property type="match status" value="1"/>
</dbReference>
<reference key="1">
    <citation type="journal article" date="2002" name="J. Bacteriol.">
        <title>Genome sequence and analysis of the oral bacterium Fusobacterium nucleatum strain ATCC 25586.</title>
        <authorList>
            <person name="Kapatral V."/>
            <person name="Anderson I."/>
            <person name="Ivanova N."/>
            <person name="Reznik G."/>
            <person name="Los T."/>
            <person name="Lykidis A."/>
            <person name="Bhattacharyya A."/>
            <person name="Bartman A."/>
            <person name="Gardner W."/>
            <person name="Grechkin G."/>
            <person name="Zhu L."/>
            <person name="Vasieva O."/>
            <person name="Chu L."/>
            <person name="Kogan Y."/>
            <person name="Chaga O."/>
            <person name="Goltsman E."/>
            <person name="Bernal A."/>
            <person name="Larsen N."/>
            <person name="D'Souza M."/>
            <person name="Walunas T."/>
            <person name="Pusch G."/>
            <person name="Haselkorn R."/>
            <person name="Fonstein M."/>
            <person name="Kyrpides N.C."/>
            <person name="Overbeek R."/>
        </authorList>
    </citation>
    <scope>NUCLEOTIDE SEQUENCE [LARGE SCALE GENOMIC DNA]</scope>
    <source>
        <strain>ATCC 25586 / DSM 15643 / BCRC 10681 / CIP 101130 / JCM 8532 / KCTC 2640 / LMG 13131 / VPI 4355</strain>
    </source>
</reference>
<comment type="function">
    <text evidence="1">Removes 5-oxoproline from various penultimate amino acid residues except L-proline.</text>
</comment>
<comment type="catalytic activity">
    <reaction evidence="1">
        <text>Release of an N-terminal pyroglutamyl group from a polypeptide, the second amino acid generally not being Pro.</text>
        <dbReference type="EC" id="3.4.19.3"/>
    </reaction>
</comment>
<comment type="subunit">
    <text evidence="1">Homotetramer.</text>
</comment>
<comment type="subcellular location">
    <subcellularLocation>
        <location evidence="1">Cytoplasm</location>
    </subcellularLocation>
</comment>
<comment type="similarity">
    <text evidence="1">Belongs to the peptidase C15 family.</text>
</comment>
<accession>Q8RI83</accession>
<keyword id="KW-0963">Cytoplasm</keyword>
<keyword id="KW-0378">Hydrolase</keyword>
<keyword id="KW-0645">Protease</keyword>
<keyword id="KW-1185">Reference proteome</keyword>
<keyword id="KW-0788">Thiol protease</keyword>
<feature type="chain" id="PRO_0000184719" description="Pyrrolidone-carboxylate peptidase">
    <location>
        <begin position="1"/>
        <end position="214"/>
    </location>
</feature>
<feature type="active site" evidence="1">
    <location>
        <position position="79"/>
    </location>
</feature>
<feature type="active site" evidence="1">
    <location>
        <position position="142"/>
    </location>
</feature>
<feature type="active site" evidence="1">
    <location>
        <position position="166"/>
    </location>
</feature>
<sequence>MKKILVTGFDPFGGEKINPALEVIKLLPKKIGENEIKILEIPTVYKKSIEKIDKEIESYDPDYILSIGQAGGRTDISIERIAINIDDFRIKDNEGNQPIDEKIYLDGDNAYFSTLPIKAIQSEITKNGIPASISNTAGTFVCNHVFYGVRYLIEKKYKGKKSGFIHIPYLPEQIIGKADTPSMSLDNILKGITIAIEIIFSVENDIKKLGGSIC</sequence>
<name>PCP_FUSNN</name>
<proteinExistence type="inferred from homology"/>
<protein>
    <recommendedName>
        <fullName evidence="1">Pyrrolidone-carboxylate peptidase</fullName>
        <ecNumber evidence="1">3.4.19.3</ecNumber>
    </recommendedName>
    <alternativeName>
        <fullName evidence="1">5-oxoprolyl-peptidase</fullName>
    </alternativeName>
    <alternativeName>
        <fullName evidence="1">Pyroglutamyl-peptidase I</fullName>
        <shortName evidence="1">PGP-I</shortName>
        <shortName evidence="1">Pyrase</shortName>
    </alternativeName>
</protein>
<gene>
    <name evidence="1" type="primary">pcp</name>
    <name type="ordered locus">FN1728</name>
</gene>